<reference key="1">
    <citation type="submission" date="2006-04" db="EMBL/GenBank/DDBJ databases">
        <title>Complete sequence of chromosome of Deinococcus geothermalis DSM 11300.</title>
        <authorList>
            <person name="Copeland A."/>
            <person name="Lucas S."/>
            <person name="Lapidus A."/>
            <person name="Barry K."/>
            <person name="Detter J.C."/>
            <person name="Glavina del Rio T."/>
            <person name="Hammon N."/>
            <person name="Israni S."/>
            <person name="Dalin E."/>
            <person name="Tice H."/>
            <person name="Pitluck S."/>
            <person name="Brettin T."/>
            <person name="Bruce D."/>
            <person name="Han C."/>
            <person name="Tapia R."/>
            <person name="Saunders E."/>
            <person name="Gilna P."/>
            <person name="Schmutz J."/>
            <person name="Larimer F."/>
            <person name="Land M."/>
            <person name="Hauser L."/>
            <person name="Kyrpides N."/>
            <person name="Kim E."/>
            <person name="Daly M.J."/>
            <person name="Fredrickson J.K."/>
            <person name="Makarova K.S."/>
            <person name="Gaidamakova E.K."/>
            <person name="Zhai M."/>
            <person name="Richardson P."/>
        </authorList>
    </citation>
    <scope>NUCLEOTIDE SEQUENCE [LARGE SCALE GENOMIC DNA]</scope>
    <source>
        <strain>DSM 11300 / CIP 105573 / AG-3a</strain>
    </source>
</reference>
<proteinExistence type="inferred from homology"/>
<keyword id="KW-0687">Ribonucleoprotein</keyword>
<keyword id="KW-0689">Ribosomal protein</keyword>
<evidence type="ECO:0000255" key="1">
    <source>
        <dbReference type="HAMAP-Rule" id="MF_00402"/>
    </source>
</evidence>
<evidence type="ECO:0000256" key="2">
    <source>
        <dbReference type="SAM" id="MobiDB-lite"/>
    </source>
</evidence>
<evidence type="ECO:0000305" key="3"/>
<sequence>MQNIKVNRGAILRSVEQAHIKQDHPDFQPGDTVRVETKVVEGNRTRNQAFEGVVIAINGTGSRKSFTVRKISFGEGVERVFPFSSPLVAKVTVLERGKVRRAKLYYLRELRGKAARIKSDRSRVMKDAARAQQARDAAQGNSSSETQSSTAAVETQGE</sequence>
<gene>
    <name evidence="1" type="primary">rplS</name>
    <name type="ordered locus">Dgeo_1738</name>
</gene>
<accession>Q1IXK1</accession>
<feature type="chain" id="PRO_0000252504" description="Large ribosomal subunit protein bL19">
    <location>
        <begin position="1"/>
        <end position="158"/>
    </location>
</feature>
<feature type="region of interest" description="Disordered" evidence="2">
    <location>
        <begin position="119"/>
        <end position="158"/>
    </location>
</feature>
<feature type="compositionally biased region" description="Basic and acidic residues" evidence="2">
    <location>
        <begin position="119"/>
        <end position="129"/>
    </location>
</feature>
<feature type="compositionally biased region" description="Low complexity" evidence="2">
    <location>
        <begin position="130"/>
        <end position="139"/>
    </location>
</feature>
<feature type="compositionally biased region" description="Polar residues" evidence="2">
    <location>
        <begin position="140"/>
        <end position="158"/>
    </location>
</feature>
<organism>
    <name type="scientific">Deinococcus geothermalis (strain DSM 11300 / CIP 105573 / AG-3a)</name>
    <dbReference type="NCBI Taxonomy" id="319795"/>
    <lineage>
        <taxon>Bacteria</taxon>
        <taxon>Thermotogati</taxon>
        <taxon>Deinococcota</taxon>
        <taxon>Deinococci</taxon>
        <taxon>Deinococcales</taxon>
        <taxon>Deinococcaceae</taxon>
        <taxon>Deinococcus</taxon>
    </lineage>
</organism>
<dbReference type="EMBL" id="CP000359">
    <property type="protein sequence ID" value="ABF46033.1"/>
    <property type="molecule type" value="Genomic_DNA"/>
</dbReference>
<dbReference type="RefSeq" id="WP_011530864.1">
    <property type="nucleotide sequence ID" value="NC_008025.1"/>
</dbReference>
<dbReference type="SMR" id="Q1IXK1"/>
<dbReference type="STRING" id="319795.Dgeo_1738"/>
<dbReference type="KEGG" id="dge:Dgeo_1738"/>
<dbReference type="eggNOG" id="COG0335">
    <property type="taxonomic scope" value="Bacteria"/>
</dbReference>
<dbReference type="HOGENOM" id="CLU_103507_0_2_0"/>
<dbReference type="Proteomes" id="UP000002431">
    <property type="component" value="Chromosome"/>
</dbReference>
<dbReference type="GO" id="GO:0022625">
    <property type="term" value="C:cytosolic large ribosomal subunit"/>
    <property type="evidence" value="ECO:0007669"/>
    <property type="project" value="TreeGrafter"/>
</dbReference>
<dbReference type="GO" id="GO:0003735">
    <property type="term" value="F:structural constituent of ribosome"/>
    <property type="evidence" value="ECO:0007669"/>
    <property type="project" value="InterPro"/>
</dbReference>
<dbReference type="GO" id="GO:0006412">
    <property type="term" value="P:translation"/>
    <property type="evidence" value="ECO:0007669"/>
    <property type="project" value="UniProtKB-UniRule"/>
</dbReference>
<dbReference type="FunFam" id="2.30.30.790:FF:000001">
    <property type="entry name" value="50S ribosomal protein L19"/>
    <property type="match status" value="1"/>
</dbReference>
<dbReference type="Gene3D" id="2.30.30.790">
    <property type="match status" value="1"/>
</dbReference>
<dbReference type="HAMAP" id="MF_00402">
    <property type="entry name" value="Ribosomal_bL19"/>
    <property type="match status" value="1"/>
</dbReference>
<dbReference type="InterPro" id="IPR001857">
    <property type="entry name" value="Ribosomal_bL19"/>
</dbReference>
<dbReference type="InterPro" id="IPR018257">
    <property type="entry name" value="Ribosomal_bL19_CS"/>
</dbReference>
<dbReference type="InterPro" id="IPR038657">
    <property type="entry name" value="Ribosomal_bL19_sf"/>
</dbReference>
<dbReference type="InterPro" id="IPR008991">
    <property type="entry name" value="Translation_prot_SH3-like_sf"/>
</dbReference>
<dbReference type="NCBIfam" id="TIGR01024">
    <property type="entry name" value="rplS_bact"/>
    <property type="match status" value="1"/>
</dbReference>
<dbReference type="PANTHER" id="PTHR15680:SF9">
    <property type="entry name" value="LARGE RIBOSOMAL SUBUNIT PROTEIN BL19M"/>
    <property type="match status" value="1"/>
</dbReference>
<dbReference type="PANTHER" id="PTHR15680">
    <property type="entry name" value="RIBOSOMAL PROTEIN L19"/>
    <property type="match status" value="1"/>
</dbReference>
<dbReference type="Pfam" id="PF01245">
    <property type="entry name" value="Ribosomal_L19"/>
    <property type="match status" value="1"/>
</dbReference>
<dbReference type="PIRSF" id="PIRSF002191">
    <property type="entry name" value="Ribosomal_L19"/>
    <property type="match status" value="1"/>
</dbReference>
<dbReference type="PRINTS" id="PR00061">
    <property type="entry name" value="RIBOSOMALL19"/>
</dbReference>
<dbReference type="SUPFAM" id="SSF50104">
    <property type="entry name" value="Translation proteins SH3-like domain"/>
    <property type="match status" value="1"/>
</dbReference>
<dbReference type="PROSITE" id="PS01015">
    <property type="entry name" value="RIBOSOMAL_L19"/>
    <property type="match status" value="1"/>
</dbReference>
<protein>
    <recommendedName>
        <fullName evidence="1">Large ribosomal subunit protein bL19</fullName>
    </recommendedName>
    <alternativeName>
        <fullName evidence="3">50S ribosomal protein L19</fullName>
    </alternativeName>
</protein>
<comment type="function">
    <text evidence="1">This protein is located at the 30S-50S ribosomal subunit interface and may play a role in the structure and function of the aminoacyl-tRNA binding site.</text>
</comment>
<comment type="similarity">
    <text evidence="1">Belongs to the bacterial ribosomal protein bL19 family.</text>
</comment>
<name>RL19_DEIGD</name>